<proteinExistence type="inferred from homology"/>
<organism>
    <name type="scientific">Aspergillus terreus (strain NIH 2624 / FGSC A1156)</name>
    <dbReference type="NCBI Taxonomy" id="341663"/>
    <lineage>
        <taxon>Eukaryota</taxon>
        <taxon>Fungi</taxon>
        <taxon>Dikarya</taxon>
        <taxon>Ascomycota</taxon>
        <taxon>Pezizomycotina</taxon>
        <taxon>Eurotiomycetes</taxon>
        <taxon>Eurotiomycetidae</taxon>
        <taxon>Eurotiales</taxon>
        <taxon>Aspergillaceae</taxon>
        <taxon>Aspergillus</taxon>
        <taxon>Aspergillus subgen. Circumdati</taxon>
    </lineage>
</organism>
<feature type="chain" id="PRO_0000292510" description="Vacuolar protein sorting-associated protein 27">
    <location>
        <begin position="1"/>
        <end position="556"/>
    </location>
</feature>
<feature type="domain" description="VHS" evidence="4">
    <location>
        <begin position="16"/>
        <end position="147"/>
    </location>
</feature>
<feature type="domain" description="UIM 1" evidence="3">
    <location>
        <begin position="261"/>
        <end position="280"/>
    </location>
</feature>
<feature type="domain" description="UIM 2" evidence="3">
    <location>
        <begin position="307"/>
        <end position="326"/>
    </location>
</feature>
<feature type="zinc finger region" description="FYVE-type; degenerate" evidence="2">
    <location>
        <begin position="165"/>
        <end position="225"/>
    </location>
</feature>
<feature type="region of interest" description="Disordered" evidence="5">
    <location>
        <begin position="232"/>
        <end position="259"/>
    </location>
</feature>
<feature type="region of interest" description="Disordered" evidence="5">
    <location>
        <begin position="276"/>
        <end position="310"/>
    </location>
</feature>
<feature type="region of interest" description="Disordered" evidence="5">
    <location>
        <begin position="323"/>
        <end position="355"/>
    </location>
</feature>
<feature type="compositionally biased region" description="Polar residues" evidence="5">
    <location>
        <begin position="232"/>
        <end position="249"/>
    </location>
</feature>
<feature type="compositionally biased region" description="Polar residues" evidence="5">
    <location>
        <begin position="335"/>
        <end position="353"/>
    </location>
</feature>
<reference key="1">
    <citation type="submission" date="2005-09" db="EMBL/GenBank/DDBJ databases">
        <title>Annotation of the Aspergillus terreus NIH2624 genome.</title>
        <authorList>
            <person name="Birren B.W."/>
            <person name="Lander E.S."/>
            <person name="Galagan J.E."/>
            <person name="Nusbaum C."/>
            <person name="Devon K."/>
            <person name="Henn M."/>
            <person name="Ma L.-J."/>
            <person name="Jaffe D.B."/>
            <person name="Butler J."/>
            <person name="Alvarez P."/>
            <person name="Gnerre S."/>
            <person name="Grabherr M."/>
            <person name="Kleber M."/>
            <person name="Mauceli E.W."/>
            <person name="Brockman W."/>
            <person name="Rounsley S."/>
            <person name="Young S.K."/>
            <person name="LaButti K."/>
            <person name="Pushparaj V."/>
            <person name="DeCaprio D."/>
            <person name="Crawford M."/>
            <person name="Koehrsen M."/>
            <person name="Engels R."/>
            <person name="Montgomery P."/>
            <person name="Pearson M."/>
            <person name="Howarth C."/>
            <person name="Larson L."/>
            <person name="Luoma S."/>
            <person name="White J."/>
            <person name="Alvarado L."/>
            <person name="Kodira C.D."/>
            <person name="Zeng Q."/>
            <person name="Oleary S."/>
            <person name="Yandava C."/>
            <person name="Denning D.W."/>
            <person name="Nierman W.C."/>
            <person name="Milne T."/>
            <person name="Madden K."/>
        </authorList>
    </citation>
    <scope>NUCLEOTIDE SEQUENCE [LARGE SCALE GENOMIC DNA]</scope>
    <source>
        <strain>NIH 2624 / FGSC A1156</strain>
    </source>
</reference>
<protein>
    <recommendedName>
        <fullName>Vacuolar protein sorting-associated protein 27</fullName>
    </recommendedName>
</protein>
<name>VPS27_ASPTN</name>
<accession>Q0CJV3</accession>
<keyword id="KW-0967">Endosome</keyword>
<keyword id="KW-0472">Membrane</keyword>
<keyword id="KW-0479">Metal-binding</keyword>
<keyword id="KW-1185">Reference proteome</keyword>
<keyword id="KW-0677">Repeat</keyword>
<keyword id="KW-0862">Zinc</keyword>
<keyword id="KW-0863">Zinc-finger</keyword>
<dbReference type="EMBL" id="CH476601">
    <property type="protein sequence ID" value="EAU33792.1"/>
    <property type="molecule type" value="Genomic_DNA"/>
</dbReference>
<dbReference type="RefSeq" id="XP_001215209.1">
    <property type="nucleotide sequence ID" value="XM_001215209.1"/>
</dbReference>
<dbReference type="SMR" id="Q0CJV3"/>
<dbReference type="STRING" id="341663.Q0CJV3"/>
<dbReference type="EnsemblFungi" id="EAU33792">
    <property type="protein sequence ID" value="EAU33792"/>
    <property type="gene ID" value="ATEG_06031"/>
</dbReference>
<dbReference type="GeneID" id="4321630"/>
<dbReference type="VEuPathDB" id="FungiDB:ATEG_06031"/>
<dbReference type="eggNOG" id="KOG1818">
    <property type="taxonomic scope" value="Eukaryota"/>
</dbReference>
<dbReference type="HOGENOM" id="CLU_011862_2_1_1"/>
<dbReference type="OMA" id="HTWGGNT"/>
<dbReference type="OrthoDB" id="957735at2759"/>
<dbReference type="Proteomes" id="UP000007963">
    <property type="component" value="Unassembled WGS sequence"/>
</dbReference>
<dbReference type="GO" id="GO:0010008">
    <property type="term" value="C:endosome membrane"/>
    <property type="evidence" value="ECO:0007669"/>
    <property type="project" value="UniProtKB-SubCell"/>
</dbReference>
<dbReference type="GO" id="GO:0033565">
    <property type="term" value="C:ESCRT-0 complex"/>
    <property type="evidence" value="ECO:0007669"/>
    <property type="project" value="TreeGrafter"/>
</dbReference>
<dbReference type="GO" id="GO:0032266">
    <property type="term" value="F:phosphatidylinositol-3-phosphate binding"/>
    <property type="evidence" value="ECO:0007669"/>
    <property type="project" value="TreeGrafter"/>
</dbReference>
<dbReference type="GO" id="GO:0043130">
    <property type="term" value="F:ubiquitin binding"/>
    <property type="evidence" value="ECO:0007669"/>
    <property type="project" value="InterPro"/>
</dbReference>
<dbReference type="GO" id="GO:0008270">
    <property type="term" value="F:zinc ion binding"/>
    <property type="evidence" value="ECO:0007669"/>
    <property type="project" value="UniProtKB-KW"/>
</dbReference>
<dbReference type="GO" id="GO:0006623">
    <property type="term" value="P:protein targeting to vacuole"/>
    <property type="evidence" value="ECO:0007669"/>
    <property type="project" value="TreeGrafter"/>
</dbReference>
<dbReference type="GO" id="GO:0043328">
    <property type="term" value="P:protein transport to vacuole involved in ubiquitin-dependent protein catabolic process via the multivesicular body sorting pathway"/>
    <property type="evidence" value="ECO:0007669"/>
    <property type="project" value="TreeGrafter"/>
</dbReference>
<dbReference type="CDD" id="cd15735">
    <property type="entry name" value="FYVE_spVPS27p_like"/>
    <property type="match status" value="1"/>
</dbReference>
<dbReference type="CDD" id="cd21385">
    <property type="entry name" value="GAT_Vps27"/>
    <property type="match status" value="1"/>
</dbReference>
<dbReference type="CDD" id="cd16979">
    <property type="entry name" value="VHS_Vps27"/>
    <property type="match status" value="1"/>
</dbReference>
<dbReference type="FunFam" id="1.20.5.1940:FF:000001">
    <property type="entry name" value="Vacuolar protein sorting-associated protein 27"/>
    <property type="match status" value="1"/>
</dbReference>
<dbReference type="FunFam" id="1.25.40.90:FF:000031">
    <property type="entry name" value="Vacuolar protein sorting-associated protein 27"/>
    <property type="match status" value="1"/>
</dbReference>
<dbReference type="FunFam" id="3.30.40.10:FF:000161">
    <property type="entry name" value="Vacuolar protein sorting-associated protein 27"/>
    <property type="match status" value="1"/>
</dbReference>
<dbReference type="Gene3D" id="1.20.5.1940">
    <property type="match status" value="1"/>
</dbReference>
<dbReference type="Gene3D" id="1.25.40.90">
    <property type="match status" value="1"/>
</dbReference>
<dbReference type="Gene3D" id="6.10.140.100">
    <property type="match status" value="1"/>
</dbReference>
<dbReference type="Gene3D" id="3.30.40.10">
    <property type="entry name" value="Zinc/RING finger domain, C3HC4 (zinc finger)"/>
    <property type="match status" value="1"/>
</dbReference>
<dbReference type="InterPro" id="IPR008942">
    <property type="entry name" value="ENTH_VHS"/>
</dbReference>
<dbReference type="InterPro" id="IPR017073">
    <property type="entry name" value="HGS/VPS27"/>
</dbReference>
<dbReference type="InterPro" id="IPR003903">
    <property type="entry name" value="UIM_dom"/>
</dbReference>
<dbReference type="InterPro" id="IPR002014">
    <property type="entry name" value="VHS_dom"/>
</dbReference>
<dbReference type="InterPro" id="IPR049425">
    <property type="entry name" value="Vps27_GAT-like"/>
</dbReference>
<dbReference type="InterPro" id="IPR000306">
    <property type="entry name" value="Znf_FYVE"/>
</dbReference>
<dbReference type="InterPro" id="IPR017455">
    <property type="entry name" value="Znf_FYVE-rel"/>
</dbReference>
<dbReference type="InterPro" id="IPR011011">
    <property type="entry name" value="Znf_FYVE_PHD"/>
</dbReference>
<dbReference type="InterPro" id="IPR013083">
    <property type="entry name" value="Znf_RING/FYVE/PHD"/>
</dbReference>
<dbReference type="PANTHER" id="PTHR47794">
    <property type="entry name" value="VACUOLAR PROTEIN SORTING-ASSOCIATED PROTEIN 27"/>
    <property type="match status" value="1"/>
</dbReference>
<dbReference type="PANTHER" id="PTHR47794:SF1">
    <property type="entry name" value="VACUOLAR PROTEIN SORTING-ASSOCIATED PROTEIN 27"/>
    <property type="match status" value="1"/>
</dbReference>
<dbReference type="Pfam" id="PF01363">
    <property type="entry name" value="FYVE"/>
    <property type="match status" value="1"/>
</dbReference>
<dbReference type="Pfam" id="PF02809">
    <property type="entry name" value="UIM"/>
    <property type="match status" value="2"/>
</dbReference>
<dbReference type="Pfam" id="PF00790">
    <property type="entry name" value="VHS"/>
    <property type="match status" value="1"/>
</dbReference>
<dbReference type="Pfam" id="PF21356">
    <property type="entry name" value="Vps27_GAT-like"/>
    <property type="match status" value="1"/>
</dbReference>
<dbReference type="PIRSF" id="PIRSF036956">
    <property type="entry name" value="Hrs_Vps27"/>
    <property type="match status" value="1"/>
</dbReference>
<dbReference type="SMART" id="SM00064">
    <property type="entry name" value="FYVE"/>
    <property type="match status" value="1"/>
</dbReference>
<dbReference type="SMART" id="SM00726">
    <property type="entry name" value="UIM"/>
    <property type="match status" value="2"/>
</dbReference>
<dbReference type="SMART" id="SM00288">
    <property type="entry name" value="VHS"/>
    <property type="match status" value="1"/>
</dbReference>
<dbReference type="SUPFAM" id="SSF48464">
    <property type="entry name" value="ENTH/VHS domain"/>
    <property type="match status" value="1"/>
</dbReference>
<dbReference type="SUPFAM" id="SSF57903">
    <property type="entry name" value="FYVE/PHD zinc finger"/>
    <property type="match status" value="1"/>
</dbReference>
<dbReference type="PROSITE" id="PS50330">
    <property type="entry name" value="UIM"/>
    <property type="match status" value="2"/>
</dbReference>
<dbReference type="PROSITE" id="PS50179">
    <property type="entry name" value="VHS"/>
    <property type="match status" value="1"/>
</dbReference>
<dbReference type="PROSITE" id="PS50178">
    <property type="entry name" value="ZF_FYVE"/>
    <property type="match status" value="1"/>
</dbReference>
<evidence type="ECO:0000250" key="1"/>
<evidence type="ECO:0000255" key="2">
    <source>
        <dbReference type="PROSITE-ProRule" id="PRU00091"/>
    </source>
</evidence>
<evidence type="ECO:0000255" key="3">
    <source>
        <dbReference type="PROSITE-ProRule" id="PRU00213"/>
    </source>
</evidence>
<evidence type="ECO:0000255" key="4">
    <source>
        <dbReference type="PROSITE-ProRule" id="PRU00218"/>
    </source>
</evidence>
<evidence type="ECO:0000256" key="5">
    <source>
        <dbReference type="SAM" id="MobiDB-lite"/>
    </source>
</evidence>
<evidence type="ECO:0000305" key="6"/>
<comment type="function">
    <text evidence="1">Component of the ESCRT-0 complex which is the sorting receptor for ubiquitinated cargo proteins at the multivesicular body (MVB) and recruits ESCRT-I to the MVB outer membrane.</text>
</comment>
<comment type="subunit">
    <text>Component of the ESCRT-0 complex composed of HSE1 and VPS27.</text>
</comment>
<comment type="subcellular location">
    <subcellularLocation>
        <location evidence="1">Endosome membrane</location>
        <topology evidence="1">Peripheral membrane protein</topology>
        <orientation evidence="1">Cytoplasmic side</orientation>
    </subcellularLocation>
</comment>
<comment type="domain">
    <text>The FYVE domain is involved in the binding to phosphatidylinositol 3-phosphate (PtdIns(3)P) which is required for the association to endosomal membranes.</text>
</comment>
<comment type="domain">
    <text evidence="1">Both IUM domains are necessary for efficient binding to ubiquitin.</text>
</comment>
<comment type="similarity">
    <text evidence="6">Belongs to the VPS27 family.</text>
</comment>
<sequence>MAGWFSSASPLDEQVERATSSSLEDIALNLEISDLIRSKSVQPKEAMRSLKRRLENKNPNVQLATLKLTDTCVKNGGTHFLAEIASREFMDNLVSLLKTEGLQLNTEVKEKMLELIQDWAMAAQGRMDLSYVGQTYQRLQEEGFRFPPKTQISGSMLESSAPPEWIDSDVCMRCRTAFSFMNRKHHCRNCGNVFDAQCSSKTLPLPHLGILQPVRVDDGCYAKLTSKAAQSSGLSDRTSFKNNSITKSSAMEPRTARAEGGFDDDLRRALQMSLEEAQNKGSSGYVPQPKVAQEPPKPSGQPTAEEEEDADLKAAIEASLRDMEEHKQKHAAALKNTTSETPSHQPQNTTTLPKNPYELSPVEVENIHLFAALVDRLQHQPPGTILREPQIQELYESIGTLRPKLARSYGETMSKHDTLLDLHSKLSTVVRYYDRMLEERLSSAYSQHSLGYGSIPSGPGYPNVYPSMPPTAEGKAGAENFYYGNSVVENPLTASNPQYPQAAPDMMSREKDTHARRPYEPQYVYTALHSLSTTILQWNGAPATDLHSPPPSANVP</sequence>
<gene>
    <name type="primary">vps27</name>
    <name type="ORF">ATEG_06031</name>
</gene>